<proteinExistence type="evidence at protein level"/>
<protein>
    <recommendedName>
        <fullName>Pheromone-binding protein</fullName>
        <shortName>PBP</shortName>
    </recommendedName>
</protein>
<dbReference type="EMBL" id="M21797">
    <property type="protein sequence ID" value="AAA29325.1"/>
    <property type="molecule type" value="mRNA"/>
</dbReference>
<dbReference type="EMBL" id="M21798">
    <property type="protein sequence ID" value="AAA29326.1"/>
    <property type="molecule type" value="mRNA"/>
</dbReference>
<dbReference type="PIR" id="A31770">
    <property type="entry name" value="A31770"/>
</dbReference>
<dbReference type="SMR" id="P18959"/>
<dbReference type="OrthoDB" id="7413278at2759"/>
<dbReference type="GO" id="GO:0005550">
    <property type="term" value="F:pheromone binding"/>
    <property type="evidence" value="ECO:0007669"/>
    <property type="project" value="UniProtKB-KW"/>
</dbReference>
<dbReference type="GO" id="GO:0019236">
    <property type="term" value="P:response to pheromone"/>
    <property type="evidence" value="ECO:0007669"/>
    <property type="project" value="UniProtKB-KW"/>
</dbReference>
<dbReference type="CDD" id="cd23992">
    <property type="entry name" value="PBP_GOBP"/>
    <property type="match status" value="1"/>
</dbReference>
<dbReference type="Gene3D" id="1.10.238.20">
    <property type="entry name" value="Pheromone/general odorant binding protein domain"/>
    <property type="match status" value="1"/>
</dbReference>
<dbReference type="InterPro" id="IPR006072">
    <property type="entry name" value="Odorant/phero-bd_Lep"/>
</dbReference>
<dbReference type="InterPro" id="IPR006170">
    <property type="entry name" value="PBP/GOBP"/>
</dbReference>
<dbReference type="InterPro" id="IPR036728">
    <property type="entry name" value="PBP_GOBP_sf"/>
</dbReference>
<dbReference type="Pfam" id="PF01395">
    <property type="entry name" value="PBP_GOBP"/>
    <property type="match status" value="1"/>
</dbReference>
<dbReference type="PIRSF" id="PIRSF015604">
    <property type="entry name" value="Odorant/phero_bd"/>
    <property type="match status" value="1"/>
</dbReference>
<dbReference type="PRINTS" id="PR00484">
    <property type="entry name" value="PBPGOBP"/>
</dbReference>
<dbReference type="SMART" id="SM00708">
    <property type="entry name" value="PhBP"/>
    <property type="match status" value="1"/>
</dbReference>
<dbReference type="SUPFAM" id="SSF47565">
    <property type="entry name" value="Insect pheromone/odorant-binding proteins"/>
    <property type="match status" value="1"/>
</dbReference>
<evidence type="ECO:0000250" key="1"/>
<evidence type="ECO:0000269" key="2">
    <source>
    </source>
</evidence>
<evidence type="ECO:0000269" key="3">
    <source>
    </source>
</evidence>
<evidence type="ECO:0000305" key="4"/>
<organism>
    <name type="scientific">Manduca sexta</name>
    <name type="common">Tobacco hawkmoth</name>
    <name type="synonym">Tobacco hornworm</name>
    <dbReference type="NCBI Taxonomy" id="7130"/>
    <lineage>
        <taxon>Eukaryota</taxon>
        <taxon>Metazoa</taxon>
        <taxon>Ecdysozoa</taxon>
        <taxon>Arthropoda</taxon>
        <taxon>Hexapoda</taxon>
        <taxon>Insecta</taxon>
        <taxon>Pterygota</taxon>
        <taxon>Neoptera</taxon>
        <taxon>Endopterygota</taxon>
        <taxon>Lepidoptera</taxon>
        <taxon>Glossata</taxon>
        <taxon>Ditrysia</taxon>
        <taxon>Bombycoidea</taxon>
        <taxon>Sphingidae</taxon>
        <taxon>Sphinginae</taxon>
        <taxon>Sphingini</taxon>
        <taxon>Manduca</taxon>
    </lineage>
</organism>
<accession>P18959</accession>
<feature type="signal peptide" evidence="2 3">
    <location>
        <begin position="1"/>
        <end position="26"/>
    </location>
</feature>
<feature type="chain" id="PRO_0000012563" description="Pheromone-binding protein">
    <location>
        <begin position="27"/>
        <end position="168"/>
    </location>
</feature>
<feature type="disulfide bond" evidence="1">
    <location>
        <begin position="45"/>
        <end position="80"/>
    </location>
</feature>
<feature type="disulfide bond" evidence="1">
    <location>
        <begin position="76"/>
        <end position="134"/>
    </location>
</feature>
<feature type="disulfide bond" evidence="1">
    <location>
        <begin position="123"/>
        <end position="143"/>
    </location>
</feature>
<feature type="sequence variant">
    <original>D</original>
    <variation>E</variation>
    <location>
        <position position="29"/>
    </location>
</feature>
<feature type="sequence variant">
    <original>I</original>
    <variation>V</variation>
    <location>
        <position position="120"/>
    </location>
</feature>
<comment type="function">
    <text>This major soluble protein in olfactory sensilla of male moths might serve to solubilize the extremely hydrophobic pheromone molecules and to transport pheromone through the aqueous lymph to receptors located on olfactory cilia. PBP is also found in sensilla from female M.sexta antennae.</text>
</comment>
<comment type="subunit">
    <text evidence="4">Homodimer.</text>
</comment>
<comment type="tissue specificity">
    <text>Antenna.</text>
</comment>
<comment type="developmental stage">
    <text>Its synthesis occurs around the time of eclosion.</text>
</comment>
<comment type="similarity">
    <text evidence="4">Belongs to the PBP/GOBP family.</text>
</comment>
<sequence>MNKTTTKMKVAVVAIVVYLAVGNVDSSPDVMKNLCLNFGKALDECKAEMNLSDSIKDDFANFWVEGYEVSNRDTGCAILCLSKKLDMIDPDGKLHHGNAMEFAKKHGADEAMAKQLLDIIHNCENSTPPNDDACLKTLDIAKCFKKEIHKLNWAPNMDLVVGEVLAEV</sequence>
<keyword id="KW-0903">Direct protein sequencing</keyword>
<keyword id="KW-1015">Disulfide bond</keyword>
<keyword id="KW-0589">Pheromone response</keyword>
<keyword id="KW-0590">Pheromone-binding</keyword>
<keyword id="KW-0732">Signal</keyword>
<keyword id="KW-0813">Transport</keyword>
<reference key="1">
    <citation type="journal article" date="1988" name="Proc. Natl. Acad. Sci. U.S.A.">
        <title>Characterization and cDNA cloning of the pheromone-binding protein from the tobacco hornworm, Manduca sexta: a tissue-specific developmentally regulated protein.</title>
        <authorList>
            <person name="Gyoergyi T.K."/>
            <person name="Roby-Shemkovitz A.J."/>
            <person name="Lerner M.R."/>
        </authorList>
    </citation>
    <scope>NUCLEOTIDE SEQUENCE [MRNA]</scope>
    <scope>PROTEIN SEQUENCE OF 27-56</scope>
</reference>
<reference key="2">
    <citation type="journal article" date="1991" name="J. Neurobiol.">
        <title>Odorant-binding-protein subfamilies associate with distinct classes of olfactory receptor neurons in insects.</title>
        <authorList>
            <person name="Vogt R.G."/>
            <person name="Prestwich G.D."/>
            <person name="Lerner M.R."/>
        </authorList>
    </citation>
    <scope>PROTEIN SEQUENCE OF 27-61</scope>
</reference>
<name>PBP_MANSE</name>